<name>GPMI_CROS8</name>
<evidence type="ECO:0000255" key="1">
    <source>
        <dbReference type="HAMAP-Rule" id="MF_01038"/>
    </source>
</evidence>
<protein>
    <recommendedName>
        <fullName evidence="1">2,3-bisphosphoglycerate-independent phosphoglycerate mutase</fullName>
        <shortName evidence="1">BPG-independent PGAM</shortName>
        <shortName evidence="1">Phosphoglyceromutase</shortName>
        <shortName evidence="1">iPGM</shortName>
        <ecNumber evidence="1">5.4.2.12</ecNumber>
    </recommendedName>
</protein>
<gene>
    <name evidence="1" type="primary">gpmI</name>
    <name type="ordered locus">ESA_04115</name>
</gene>
<reference key="1">
    <citation type="journal article" date="2010" name="PLoS ONE">
        <title>Genome sequence of Cronobacter sakazakii BAA-894 and comparative genomic hybridization analysis with other Cronobacter species.</title>
        <authorList>
            <person name="Kucerova E."/>
            <person name="Clifton S.W."/>
            <person name="Xia X.Q."/>
            <person name="Long F."/>
            <person name="Porwollik S."/>
            <person name="Fulton L."/>
            <person name="Fronick C."/>
            <person name="Minx P."/>
            <person name="Kyung K."/>
            <person name="Warren W."/>
            <person name="Fulton R."/>
            <person name="Feng D."/>
            <person name="Wollam A."/>
            <person name="Shah N."/>
            <person name="Bhonagiri V."/>
            <person name="Nash W.E."/>
            <person name="Hallsworth-Pepin K."/>
            <person name="Wilson R.K."/>
            <person name="McClelland M."/>
            <person name="Forsythe S.J."/>
        </authorList>
    </citation>
    <scope>NUCLEOTIDE SEQUENCE [LARGE SCALE GENOMIC DNA]</scope>
    <source>
        <strain>ATCC BAA-894</strain>
    </source>
</reference>
<accession>A7MID1</accession>
<organism>
    <name type="scientific">Cronobacter sakazakii (strain ATCC BAA-894)</name>
    <name type="common">Enterobacter sakazakii</name>
    <dbReference type="NCBI Taxonomy" id="290339"/>
    <lineage>
        <taxon>Bacteria</taxon>
        <taxon>Pseudomonadati</taxon>
        <taxon>Pseudomonadota</taxon>
        <taxon>Gammaproteobacteria</taxon>
        <taxon>Enterobacterales</taxon>
        <taxon>Enterobacteriaceae</taxon>
        <taxon>Cronobacter</taxon>
    </lineage>
</organism>
<keyword id="KW-0324">Glycolysis</keyword>
<keyword id="KW-0413">Isomerase</keyword>
<keyword id="KW-0464">Manganese</keyword>
<keyword id="KW-0479">Metal-binding</keyword>
<keyword id="KW-1185">Reference proteome</keyword>
<proteinExistence type="inferred from homology"/>
<sequence length="515" mass="55983">MSLTKKPVVLVILDGYGYREDSQDNAISAAKTPVMDSLWVNRPHTLIDASGLEVGLPDRQMGNSEVGHVNLGAGRIVYQDLTRLDVEIKERTFFENPVLTAAVDKAVAAGKAVHIMGLASPGGVHSHEDHILAMIELAAARGAEKIYLHAFLDGRDTPPRSAKASLEKFAAKFAEVGKGRIASIIGRYFAMDRDNRWDRVEQAYDLLTLAKGEYEAPNAVAGLEAAYARDENDEFVKATVIRGEGEASAAMEDGDALIFMNFRADRARQITRAFVNRDFEGFSRKKVVKFADFVMLTEYAADIRTACAYPPASLLNTFGEWMAKHNKTQLRISETEKYAHVTFFFNGGVEEPFPGEDRILINSPKVATYDLQPEMSSAELTEKLVGAINSGKYDAIICNYPNGDMVGHTGVFDAAVAAVEALDNCIAQVTRAVEAAGGQMLITADHGNAEQMRDPATGQAHTAHTNLPVPLIYVGDKAVKAVDGGKLSDIAPTLLTLMGMEIPQEMTGKPLFIVE</sequence>
<dbReference type="EC" id="5.4.2.12" evidence="1"/>
<dbReference type="EMBL" id="CP000783">
    <property type="protein sequence ID" value="ABU79296.1"/>
    <property type="molecule type" value="Genomic_DNA"/>
</dbReference>
<dbReference type="SMR" id="A7MID1"/>
<dbReference type="KEGG" id="esa:ESA_04115"/>
<dbReference type="PATRIC" id="fig|290339.8.peg.3657"/>
<dbReference type="HOGENOM" id="CLU_026099_2_0_6"/>
<dbReference type="UniPathway" id="UPA00109">
    <property type="reaction ID" value="UER00186"/>
</dbReference>
<dbReference type="Proteomes" id="UP000000260">
    <property type="component" value="Chromosome"/>
</dbReference>
<dbReference type="GO" id="GO:0005829">
    <property type="term" value="C:cytosol"/>
    <property type="evidence" value="ECO:0007669"/>
    <property type="project" value="TreeGrafter"/>
</dbReference>
<dbReference type="GO" id="GO:0030145">
    <property type="term" value="F:manganese ion binding"/>
    <property type="evidence" value="ECO:0007669"/>
    <property type="project" value="UniProtKB-UniRule"/>
</dbReference>
<dbReference type="GO" id="GO:0004619">
    <property type="term" value="F:phosphoglycerate mutase activity"/>
    <property type="evidence" value="ECO:0007669"/>
    <property type="project" value="UniProtKB-EC"/>
</dbReference>
<dbReference type="GO" id="GO:0006007">
    <property type="term" value="P:glucose catabolic process"/>
    <property type="evidence" value="ECO:0007669"/>
    <property type="project" value="InterPro"/>
</dbReference>
<dbReference type="GO" id="GO:0006096">
    <property type="term" value="P:glycolytic process"/>
    <property type="evidence" value="ECO:0007669"/>
    <property type="project" value="UniProtKB-UniRule"/>
</dbReference>
<dbReference type="CDD" id="cd16010">
    <property type="entry name" value="iPGM"/>
    <property type="match status" value="1"/>
</dbReference>
<dbReference type="FunFam" id="3.40.1450.10:FF:000001">
    <property type="entry name" value="2,3-bisphosphoglycerate-independent phosphoglycerate mutase"/>
    <property type="match status" value="1"/>
</dbReference>
<dbReference type="FunFam" id="3.40.720.10:FF:000001">
    <property type="entry name" value="2,3-bisphosphoglycerate-independent phosphoglycerate mutase"/>
    <property type="match status" value="1"/>
</dbReference>
<dbReference type="Gene3D" id="3.40.720.10">
    <property type="entry name" value="Alkaline Phosphatase, subunit A"/>
    <property type="match status" value="1"/>
</dbReference>
<dbReference type="Gene3D" id="3.40.1450.10">
    <property type="entry name" value="BPG-independent phosphoglycerate mutase, domain B"/>
    <property type="match status" value="1"/>
</dbReference>
<dbReference type="HAMAP" id="MF_01038">
    <property type="entry name" value="GpmI"/>
    <property type="match status" value="1"/>
</dbReference>
<dbReference type="InterPro" id="IPR017850">
    <property type="entry name" value="Alkaline_phosphatase_core_sf"/>
</dbReference>
<dbReference type="InterPro" id="IPR011258">
    <property type="entry name" value="BPG-indep_PGM_N"/>
</dbReference>
<dbReference type="InterPro" id="IPR006124">
    <property type="entry name" value="Metalloenzyme"/>
</dbReference>
<dbReference type="InterPro" id="IPR036646">
    <property type="entry name" value="PGAM_B_sf"/>
</dbReference>
<dbReference type="InterPro" id="IPR005995">
    <property type="entry name" value="Pgm_bpd_ind"/>
</dbReference>
<dbReference type="NCBIfam" id="TIGR01307">
    <property type="entry name" value="pgm_bpd_ind"/>
    <property type="match status" value="1"/>
</dbReference>
<dbReference type="NCBIfam" id="NF003897">
    <property type="entry name" value="PRK05434.1-5"/>
    <property type="match status" value="1"/>
</dbReference>
<dbReference type="PANTHER" id="PTHR31637">
    <property type="entry name" value="2,3-BISPHOSPHOGLYCERATE-INDEPENDENT PHOSPHOGLYCERATE MUTASE"/>
    <property type="match status" value="1"/>
</dbReference>
<dbReference type="PANTHER" id="PTHR31637:SF0">
    <property type="entry name" value="2,3-BISPHOSPHOGLYCERATE-INDEPENDENT PHOSPHOGLYCERATE MUTASE"/>
    <property type="match status" value="1"/>
</dbReference>
<dbReference type="Pfam" id="PF06415">
    <property type="entry name" value="iPGM_N"/>
    <property type="match status" value="1"/>
</dbReference>
<dbReference type="Pfam" id="PF01676">
    <property type="entry name" value="Metalloenzyme"/>
    <property type="match status" value="1"/>
</dbReference>
<dbReference type="PIRSF" id="PIRSF001492">
    <property type="entry name" value="IPGAM"/>
    <property type="match status" value="1"/>
</dbReference>
<dbReference type="SUPFAM" id="SSF64158">
    <property type="entry name" value="2,3-Bisphosphoglycerate-independent phosphoglycerate mutase, substrate-binding domain"/>
    <property type="match status" value="1"/>
</dbReference>
<dbReference type="SUPFAM" id="SSF53649">
    <property type="entry name" value="Alkaline phosphatase-like"/>
    <property type="match status" value="1"/>
</dbReference>
<feature type="chain" id="PRO_1000063966" description="2,3-bisphosphoglycerate-independent phosphoglycerate mutase">
    <location>
        <begin position="1"/>
        <end position="515"/>
    </location>
</feature>
<feature type="active site" description="Phosphoserine intermediate" evidence="1">
    <location>
        <position position="64"/>
    </location>
</feature>
<feature type="binding site" evidence="1">
    <location>
        <position position="14"/>
    </location>
    <ligand>
        <name>Mn(2+)</name>
        <dbReference type="ChEBI" id="CHEBI:29035"/>
        <label>2</label>
    </ligand>
</feature>
<feature type="binding site" evidence="1">
    <location>
        <position position="64"/>
    </location>
    <ligand>
        <name>Mn(2+)</name>
        <dbReference type="ChEBI" id="CHEBI:29035"/>
        <label>2</label>
    </ligand>
</feature>
<feature type="binding site" evidence="1">
    <location>
        <position position="125"/>
    </location>
    <ligand>
        <name>substrate</name>
    </ligand>
</feature>
<feature type="binding site" evidence="1">
    <location>
        <begin position="155"/>
        <end position="156"/>
    </location>
    <ligand>
        <name>substrate</name>
    </ligand>
</feature>
<feature type="binding site" evidence="1">
    <location>
        <position position="187"/>
    </location>
    <ligand>
        <name>substrate</name>
    </ligand>
</feature>
<feature type="binding site" evidence="1">
    <location>
        <position position="193"/>
    </location>
    <ligand>
        <name>substrate</name>
    </ligand>
</feature>
<feature type="binding site" evidence="1">
    <location>
        <begin position="263"/>
        <end position="266"/>
    </location>
    <ligand>
        <name>substrate</name>
    </ligand>
</feature>
<feature type="binding site" evidence="1">
    <location>
        <position position="337"/>
    </location>
    <ligand>
        <name>substrate</name>
    </ligand>
</feature>
<feature type="binding site" evidence="1">
    <location>
        <position position="404"/>
    </location>
    <ligand>
        <name>Mn(2+)</name>
        <dbReference type="ChEBI" id="CHEBI:29035"/>
        <label>1</label>
    </ligand>
</feature>
<feature type="binding site" evidence="1">
    <location>
        <position position="408"/>
    </location>
    <ligand>
        <name>Mn(2+)</name>
        <dbReference type="ChEBI" id="CHEBI:29035"/>
        <label>1</label>
    </ligand>
</feature>
<feature type="binding site" evidence="1">
    <location>
        <position position="445"/>
    </location>
    <ligand>
        <name>Mn(2+)</name>
        <dbReference type="ChEBI" id="CHEBI:29035"/>
        <label>2</label>
    </ligand>
</feature>
<feature type="binding site" evidence="1">
    <location>
        <position position="446"/>
    </location>
    <ligand>
        <name>Mn(2+)</name>
        <dbReference type="ChEBI" id="CHEBI:29035"/>
        <label>2</label>
    </ligand>
</feature>
<feature type="binding site" evidence="1">
    <location>
        <position position="464"/>
    </location>
    <ligand>
        <name>Mn(2+)</name>
        <dbReference type="ChEBI" id="CHEBI:29035"/>
        <label>1</label>
    </ligand>
</feature>
<comment type="function">
    <text evidence="1">Catalyzes the interconversion of 2-phosphoglycerate and 3-phosphoglycerate.</text>
</comment>
<comment type="catalytic activity">
    <reaction evidence="1">
        <text>(2R)-2-phosphoglycerate = (2R)-3-phosphoglycerate</text>
        <dbReference type="Rhea" id="RHEA:15901"/>
        <dbReference type="ChEBI" id="CHEBI:58272"/>
        <dbReference type="ChEBI" id="CHEBI:58289"/>
        <dbReference type="EC" id="5.4.2.12"/>
    </reaction>
</comment>
<comment type="cofactor">
    <cofactor evidence="1">
        <name>Mn(2+)</name>
        <dbReference type="ChEBI" id="CHEBI:29035"/>
    </cofactor>
    <text evidence="1">Binds 2 manganese ions per subunit.</text>
</comment>
<comment type="pathway">
    <text evidence="1">Carbohydrate degradation; glycolysis; pyruvate from D-glyceraldehyde 3-phosphate: step 3/5.</text>
</comment>
<comment type="subunit">
    <text evidence="1">Monomer.</text>
</comment>
<comment type="similarity">
    <text evidence="1">Belongs to the BPG-independent phosphoglycerate mutase family.</text>
</comment>